<name>RL7_ACIBC</name>
<keyword id="KW-0687">Ribonucleoprotein</keyword>
<keyword id="KW-0689">Ribosomal protein</keyword>
<protein>
    <recommendedName>
        <fullName evidence="1">Large ribosomal subunit protein bL12</fullName>
    </recommendedName>
    <alternativeName>
        <fullName evidence="2">50S ribosomal protein L7/L12</fullName>
    </alternativeName>
</protein>
<feature type="chain" id="PRO_1000121376" description="Large ribosomal subunit protein bL12">
    <location>
        <begin position="1"/>
        <end position="123"/>
    </location>
</feature>
<organism>
    <name type="scientific">Acinetobacter baumannii (strain ACICU)</name>
    <dbReference type="NCBI Taxonomy" id="405416"/>
    <lineage>
        <taxon>Bacteria</taxon>
        <taxon>Pseudomonadati</taxon>
        <taxon>Pseudomonadota</taxon>
        <taxon>Gammaproteobacteria</taxon>
        <taxon>Moraxellales</taxon>
        <taxon>Moraxellaceae</taxon>
        <taxon>Acinetobacter</taxon>
        <taxon>Acinetobacter calcoaceticus/baumannii complex</taxon>
    </lineage>
</organism>
<accession>B2I1Z0</accession>
<dbReference type="EMBL" id="CP000863">
    <property type="protein sequence ID" value="ACC55614.1"/>
    <property type="molecule type" value="Genomic_DNA"/>
</dbReference>
<dbReference type="RefSeq" id="WP_001229360.1">
    <property type="nucleotide sequence ID" value="NZ_CP031380.1"/>
</dbReference>
<dbReference type="SMR" id="B2I1Z0"/>
<dbReference type="GeneID" id="92892283"/>
<dbReference type="KEGG" id="abc:ACICU_00302"/>
<dbReference type="HOGENOM" id="CLU_086499_3_2_6"/>
<dbReference type="Proteomes" id="UP000008839">
    <property type="component" value="Chromosome"/>
</dbReference>
<dbReference type="GO" id="GO:0022625">
    <property type="term" value="C:cytosolic large ribosomal subunit"/>
    <property type="evidence" value="ECO:0007669"/>
    <property type="project" value="TreeGrafter"/>
</dbReference>
<dbReference type="GO" id="GO:0003729">
    <property type="term" value="F:mRNA binding"/>
    <property type="evidence" value="ECO:0007669"/>
    <property type="project" value="TreeGrafter"/>
</dbReference>
<dbReference type="GO" id="GO:0003735">
    <property type="term" value="F:structural constituent of ribosome"/>
    <property type="evidence" value="ECO:0007669"/>
    <property type="project" value="InterPro"/>
</dbReference>
<dbReference type="GO" id="GO:0006412">
    <property type="term" value="P:translation"/>
    <property type="evidence" value="ECO:0007669"/>
    <property type="project" value="UniProtKB-UniRule"/>
</dbReference>
<dbReference type="CDD" id="cd00387">
    <property type="entry name" value="Ribosomal_L7_L12"/>
    <property type="match status" value="1"/>
</dbReference>
<dbReference type="FunFam" id="3.30.1390.10:FF:000001">
    <property type="entry name" value="50S ribosomal protein L7/L12"/>
    <property type="match status" value="1"/>
</dbReference>
<dbReference type="Gene3D" id="3.30.1390.10">
    <property type="match status" value="1"/>
</dbReference>
<dbReference type="Gene3D" id="1.20.5.710">
    <property type="entry name" value="Single helix bin"/>
    <property type="match status" value="1"/>
</dbReference>
<dbReference type="HAMAP" id="MF_00368">
    <property type="entry name" value="Ribosomal_bL12"/>
    <property type="match status" value="1"/>
</dbReference>
<dbReference type="InterPro" id="IPR000206">
    <property type="entry name" value="Ribosomal_bL12"/>
</dbReference>
<dbReference type="InterPro" id="IPR013823">
    <property type="entry name" value="Ribosomal_bL12_C"/>
</dbReference>
<dbReference type="InterPro" id="IPR014719">
    <property type="entry name" value="Ribosomal_bL12_C/ClpS-like"/>
</dbReference>
<dbReference type="InterPro" id="IPR008932">
    <property type="entry name" value="Ribosomal_bL12_oligo"/>
</dbReference>
<dbReference type="InterPro" id="IPR036235">
    <property type="entry name" value="Ribosomal_bL12_oligo_N_sf"/>
</dbReference>
<dbReference type="NCBIfam" id="TIGR00855">
    <property type="entry name" value="L12"/>
    <property type="match status" value="1"/>
</dbReference>
<dbReference type="PANTHER" id="PTHR45987">
    <property type="entry name" value="39S RIBOSOMAL PROTEIN L12"/>
    <property type="match status" value="1"/>
</dbReference>
<dbReference type="PANTHER" id="PTHR45987:SF4">
    <property type="entry name" value="LARGE RIBOSOMAL SUBUNIT PROTEIN BL12M"/>
    <property type="match status" value="1"/>
</dbReference>
<dbReference type="Pfam" id="PF00542">
    <property type="entry name" value="Ribosomal_L12"/>
    <property type="match status" value="1"/>
</dbReference>
<dbReference type="Pfam" id="PF16320">
    <property type="entry name" value="Ribosomal_L12_N"/>
    <property type="match status" value="1"/>
</dbReference>
<dbReference type="SUPFAM" id="SSF54736">
    <property type="entry name" value="ClpS-like"/>
    <property type="match status" value="1"/>
</dbReference>
<dbReference type="SUPFAM" id="SSF48300">
    <property type="entry name" value="Ribosomal protein L7/12, oligomerisation (N-terminal) domain"/>
    <property type="match status" value="1"/>
</dbReference>
<evidence type="ECO:0000255" key="1">
    <source>
        <dbReference type="HAMAP-Rule" id="MF_00368"/>
    </source>
</evidence>
<evidence type="ECO:0000305" key="2"/>
<reference key="1">
    <citation type="journal article" date="2008" name="Antimicrob. Agents Chemother.">
        <title>Whole-genome pyrosequencing of an epidemic multidrug-resistant Acinetobacter baumannii strain belonging to the European clone II group.</title>
        <authorList>
            <person name="Iacono M."/>
            <person name="Villa L."/>
            <person name="Fortini D."/>
            <person name="Bordoni R."/>
            <person name="Imperi F."/>
            <person name="Bonnal R.J."/>
            <person name="Sicheritz-Ponten T."/>
            <person name="De Bellis G."/>
            <person name="Visca P."/>
            <person name="Cassone A."/>
            <person name="Carattoli A."/>
        </authorList>
    </citation>
    <scope>NUCLEOTIDE SEQUENCE [LARGE SCALE GENOMIC DNA]</scope>
    <source>
        <strain>ACICU</strain>
    </source>
</reference>
<proteinExistence type="inferred from homology"/>
<comment type="function">
    <text evidence="1">Forms part of the ribosomal stalk which helps the ribosome interact with GTP-bound translation factors. Is thus essential for accurate translation.</text>
</comment>
<comment type="subunit">
    <text evidence="1">Homodimer. Part of the ribosomal stalk of the 50S ribosomal subunit. Forms a multimeric L10(L12)X complex, where L10 forms an elongated spine to which 2 to 4 L12 dimers bind in a sequential fashion. Binds GTP-bound translation factors.</text>
</comment>
<comment type="similarity">
    <text evidence="1">Belongs to the bacterial ribosomal protein bL12 family.</text>
</comment>
<sequence>MALTNEEILNAVAEKTVLELVELISAFEEKFNVSAAAVAVAAPAGGAAAAAEEQSEFNVELTSFGANKVAVIKAVREATGLGLKEAKDLVEGAPQVLKEGVSKEEGEELKKKLEEAGATVTLK</sequence>
<gene>
    <name evidence="1" type="primary">rplL</name>
    <name type="ordered locus">ACICU_00302</name>
</gene>